<reference key="1">
    <citation type="journal article" date="2009" name="Proc. Natl. Acad. Sci. U.S.A.">
        <title>Biogeography of the Sulfolobus islandicus pan-genome.</title>
        <authorList>
            <person name="Reno M.L."/>
            <person name="Held N.L."/>
            <person name="Fields C.J."/>
            <person name="Burke P.V."/>
            <person name="Whitaker R.J."/>
        </authorList>
    </citation>
    <scope>NUCLEOTIDE SEQUENCE [LARGE SCALE GENOMIC DNA]</scope>
    <source>
        <strain>Y.G.57.14 / Yellowstone #1</strain>
    </source>
</reference>
<accession>C3N8Y9</accession>
<proteinExistence type="inferred from homology"/>
<evidence type="ECO:0000255" key="1">
    <source>
        <dbReference type="HAMAP-Rule" id="MF_01406"/>
    </source>
</evidence>
<dbReference type="EMBL" id="CP001403">
    <property type="protein sequence ID" value="ACP46494.1"/>
    <property type="molecule type" value="Genomic_DNA"/>
</dbReference>
<dbReference type="RefSeq" id="WP_012714202.1">
    <property type="nucleotide sequence ID" value="NC_012622.1"/>
</dbReference>
<dbReference type="KEGG" id="siy:YG5714_2245"/>
<dbReference type="HOGENOM" id="CLU_079268_0_0_2"/>
<dbReference type="Proteomes" id="UP000002308">
    <property type="component" value="Chromosome"/>
</dbReference>
<dbReference type="Gene3D" id="3.60.15.10">
    <property type="entry name" value="Ribonuclease Z/Hydroxyacylglutathione hydrolase-like"/>
    <property type="match status" value="1"/>
</dbReference>
<dbReference type="HAMAP" id="MF_01406">
    <property type="entry name" value="UPF0282"/>
    <property type="match status" value="1"/>
</dbReference>
<dbReference type="InterPro" id="IPR001279">
    <property type="entry name" value="Metallo-B-lactamas"/>
</dbReference>
<dbReference type="InterPro" id="IPR036866">
    <property type="entry name" value="RibonucZ/Hydroxyglut_hydro"/>
</dbReference>
<dbReference type="InterPro" id="IPR050114">
    <property type="entry name" value="UPF0173_UPF0282_UlaG_hydrolase"/>
</dbReference>
<dbReference type="InterPro" id="IPR014426">
    <property type="entry name" value="UPF0282_hydrls"/>
</dbReference>
<dbReference type="NCBIfam" id="NF003287">
    <property type="entry name" value="PRK04286.1-1"/>
    <property type="match status" value="1"/>
</dbReference>
<dbReference type="PANTHER" id="PTHR43546">
    <property type="entry name" value="UPF0173 METAL-DEPENDENT HYDROLASE MJ1163-RELATED"/>
    <property type="match status" value="1"/>
</dbReference>
<dbReference type="PANTHER" id="PTHR43546:SF4">
    <property type="entry name" value="UPF0282 PROTEIN MJ1629"/>
    <property type="match status" value="1"/>
</dbReference>
<dbReference type="Pfam" id="PF00753">
    <property type="entry name" value="Lactamase_B"/>
    <property type="match status" value="1"/>
</dbReference>
<dbReference type="PIRSF" id="PIRSF004944">
    <property type="entry name" value="UCP004944_hydrls"/>
    <property type="match status" value="1"/>
</dbReference>
<dbReference type="SUPFAM" id="SSF56281">
    <property type="entry name" value="Metallo-hydrolase/oxidoreductase"/>
    <property type="match status" value="1"/>
</dbReference>
<gene>
    <name type="ordered locus">YG5714_2245</name>
</gene>
<name>Y2245_SACI7</name>
<comment type="similarity">
    <text evidence="1">Belongs to the UPF0282 family.</text>
</comment>
<organism>
    <name type="scientific">Saccharolobus islandicus (strain Y.G.57.14 / Yellowstone #1)</name>
    <name type="common">Sulfolobus islandicus</name>
    <dbReference type="NCBI Taxonomy" id="439386"/>
    <lineage>
        <taxon>Archaea</taxon>
        <taxon>Thermoproteota</taxon>
        <taxon>Thermoprotei</taxon>
        <taxon>Sulfolobales</taxon>
        <taxon>Sulfolobaceae</taxon>
        <taxon>Saccharolobus</taxon>
    </lineage>
</organism>
<protein>
    <recommendedName>
        <fullName evidence="1">UPF0282 protein YG5714_2245</fullName>
    </recommendedName>
</protein>
<feature type="chain" id="PRO_1000215209" description="UPF0282 protein YG5714_2245">
    <location>
        <begin position="1"/>
        <end position="308"/>
    </location>
</feature>
<sequence>MKITPIAFESLGVRSQATLIETKDLRVLVDPAISLAPRRYNLPPHQREVDRLTELAKVLVDVAKDVDVIIVSHYHYDHHDPGYVIPTDIYKNKLVFIKDPQNMINNSQKYRRAPRFLRSIKDKPSKIEIADGKTLELGHTTISFSPAVPHGADERLGYVIQVAISDKDSTVIFTSDIEGAPKDVHLKFTKEKMPKTIIIDGPLSYLLGRVLKEEELEKSIRNMEEIVKNGLETVIIDHHVLRDINYAEVLKPVYDIAKDLGVRVTTAAEYLNLEPLILEARRKELFKEDNRPARIPRGLANLLSAGEG</sequence>